<dbReference type="EMBL" id="CP000555">
    <property type="protein sequence ID" value="ABM93485.1"/>
    <property type="molecule type" value="Genomic_DNA"/>
</dbReference>
<dbReference type="RefSeq" id="WP_011828123.1">
    <property type="nucleotide sequence ID" value="NC_008825.1"/>
</dbReference>
<dbReference type="SMR" id="A2SD46"/>
<dbReference type="STRING" id="420662.Mpe_A0523"/>
<dbReference type="KEGG" id="mpt:Mpe_A0523"/>
<dbReference type="eggNOG" id="COG0216">
    <property type="taxonomic scope" value="Bacteria"/>
</dbReference>
<dbReference type="HOGENOM" id="CLU_036856_0_1_4"/>
<dbReference type="Proteomes" id="UP000000366">
    <property type="component" value="Chromosome"/>
</dbReference>
<dbReference type="GO" id="GO:0005737">
    <property type="term" value="C:cytoplasm"/>
    <property type="evidence" value="ECO:0007669"/>
    <property type="project" value="UniProtKB-SubCell"/>
</dbReference>
<dbReference type="GO" id="GO:0016149">
    <property type="term" value="F:translation release factor activity, codon specific"/>
    <property type="evidence" value="ECO:0007669"/>
    <property type="project" value="UniProtKB-UniRule"/>
</dbReference>
<dbReference type="FunFam" id="3.30.160.20:FF:000004">
    <property type="entry name" value="Peptide chain release factor 1"/>
    <property type="match status" value="1"/>
</dbReference>
<dbReference type="FunFam" id="3.30.70.1660:FF:000002">
    <property type="entry name" value="Peptide chain release factor 1"/>
    <property type="match status" value="1"/>
</dbReference>
<dbReference type="FunFam" id="3.30.70.1660:FF:000004">
    <property type="entry name" value="Peptide chain release factor 1"/>
    <property type="match status" value="1"/>
</dbReference>
<dbReference type="Gene3D" id="3.30.160.20">
    <property type="match status" value="1"/>
</dbReference>
<dbReference type="Gene3D" id="3.30.70.1660">
    <property type="match status" value="1"/>
</dbReference>
<dbReference type="Gene3D" id="6.10.140.1950">
    <property type="match status" value="1"/>
</dbReference>
<dbReference type="HAMAP" id="MF_00093">
    <property type="entry name" value="Rel_fac_1"/>
    <property type="match status" value="1"/>
</dbReference>
<dbReference type="InterPro" id="IPR005139">
    <property type="entry name" value="PCRF"/>
</dbReference>
<dbReference type="InterPro" id="IPR000352">
    <property type="entry name" value="Pep_chain_release_fac_I"/>
</dbReference>
<dbReference type="InterPro" id="IPR045853">
    <property type="entry name" value="Pep_chain_release_fac_I_sf"/>
</dbReference>
<dbReference type="InterPro" id="IPR050057">
    <property type="entry name" value="Prokaryotic/Mito_RF"/>
</dbReference>
<dbReference type="InterPro" id="IPR004373">
    <property type="entry name" value="RF-1"/>
</dbReference>
<dbReference type="NCBIfam" id="TIGR00019">
    <property type="entry name" value="prfA"/>
    <property type="match status" value="1"/>
</dbReference>
<dbReference type="NCBIfam" id="NF001859">
    <property type="entry name" value="PRK00591.1"/>
    <property type="match status" value="1"/>
</dbReference>
<dbReference type="PANTHER" id="PTHR43804">
    <property type="entry name" value="LD18447P"/>
    <property type="match status" value="1"/>
</dbReference>
<dbReference type="PANTHER" id="PTHR43804:SF7">
    <property type="entry name" value="LD18447P"/>
    <property type="match status" value="1"/>
</dbReference>
<dbReference type="Pfam" id="PF03462">
    <property type="entry name" value="PCRF"/>
    <property type="match status" value="1"/>
</dbReference>
<dbReference type="Pfam" id="PF00472">
    <property type="entry name" value="RF-1"/>
    <property type="match status" value="1"/>
</dbReference>
<dbReference type="SMART" id="SM00937">
    <property type="entry name" value="PCRF"/>
    <property type="match status" value="1"/>
</dbReference>
<dbReference type="SUPFAM" id="SSF75620">
    <property type="entry name" value="Release factor"/>
    <property type="match status" value="1"/>
</dbReference>
<dbReference type="PROSITE" id="PS00745">
    <property type="entry name" value="RF_PROK_I"/>
    <property type="match status" value="1"/>
</dbReference>
<comment type="function">
    <text evidence="1">Peptide chain release factor 1 directs the termination of translation in response to the peptide chain termination codons UAG and UAA.</text>
</comment>
<comment type="subcellular location">
    <subcellularLocation>
        <location evidence="1">Cytoplasm</location>
    </subcellularLocation>
</comment>
<comment type="PTM">
    <text evidence="1">Methylated by PrmC. Methylation increases the termination efficiency of RF1.</text>
</comment>
<comment type="similarity">
    <text evidence="1">Belongs to the prokaryotic/mitochondrial release factor family.</text>
</comment>
<name>RF1_METPP</name>
<feature type="chain" id="PRO_1000004912" description="Peptide chain release factor 1">
    <location>
        <begin position="1"/>
        <end position="359"/>
    </location>
</feature>
<feature type="modified residue" description="N5-methylglutamine" evidence="1">
    <location>
        <position position="235"/>
    </location>
</feature>
<keyword id="KW-0963">Cytoplasm</keyword>
<keyword id="KW-0488">Methylation</keyword>
<keyword id="KW-0648">Protein biosynthesis</keyword>
<keyword id="KW-1185">Reference proteome</keyword>
<accession>A2SD46</accession>
<gene>
    <name evidence="1" type="primary">prfA</name>
    <name type="ordered locus">Mpe_A0523</name>
</gene>
<reference key="1">
    <citation type="journal article" date="2007" name="J. Bacteriol.">
        <title>Whole-genome analysis of the methyl tert-butyl ether-degrading beta-proteobacterium Methylibium petroleiphilum PM1.</title>
        <authorList>
            <person name="Kane S.R."/>
            <person name="Chakicherla A.Y."/>
            <person name="Chain P.S.G."/>
            <person name="Schmidt R."/>
            <person name="Shin M.W."/>
            <person name="Legler T.C."/>
            <person name="Scow K.M."/>
            <person name="Larimer F.W."/>
            <person name="Lucas S.M."/>
            <person name="Richardson P.M."/>
            <person name="Hristova K.R."/>
        </authorList>
    </citation>
    <scope>NUCLEOTIDE SEQUENCE [LARGE SCALE GENOMIC DNA]</scope>
    <source>
        <strain>ATCC BAA-1232 / LMG 22953 / PM1</strain>
    </source>
</reference>
<sequence length="359" mass="39532">MKPALRLQLDRYVRRLAELDSLLADPAVMRDAGGFRALSREHVEVSGIVERQRRHAQRERDLAAAAEMASDPELAAMAAEEAASAQAELDRLATELQRLLLPRDPDDARSVFLEIRAGTGGDESALFAGDLLRMYTRYAERKGWRVELLSASDSELGGYKEVVARIEGDAVFGHLKYESGGHRVQRVPATETQGRIHTSACTVAVLAEPDEAQEVTLNPADLRIDTYRASGAGGQHVNKTDSAVRITHLPTGLVAECQDDRSQHRNKAKAMAVLAARLRDKDRLERQAREAATRKSLIGSGDRSDRIRTYNFPQGRLTDHRINLTLYQLGAIMDGDLDPVVKALVAAREAELLAELEIG</sequence>
<evidence type="ECO:0000255" key="1">
    <source>
        <dbReference type="HAMAP-Rule" id="MF_00093"/>
    </source>
</evidence>
<protein>
    <recommendedName>
        <fullName evidence="1">Peptide chain release factor 1</fullName>
        <shortName evidence="1">RF-1</shortName>
    </recommendedName>
</protein>
<proteinExistence type="inferred from homology"/>
<organism>
    <name type="scientific">Methylibium petroleiphilum (strain ATCC BAA-1232 / LMG 22953 / PM1)</name>
    <dbReference type="NCBI Taxonomy" id="420662"/>
    <lineage>
        <taxon>Bacteria</taxon>
        <taxon>Pseudomonadati</taxon>
        <taxon>Pseudomonadota</taxon>
        <taxon>Betaproteobacteria</taxon>
        <taxon>Burkholderiales</taxon>
        <taxon>Sphaerotilaceae</taxon>
        <taxon>Methylibium</taxon>
    </lineage>
</organism>